<feature type="chain" id="PRO_0000283281" description="F-box protein At1g10780">
    <location>
        <begin position="1"/>
        <end position="418"/>
    </location>
</feature>
<feature type="domain" description="F-box" evidence="1">
    <location>
        <begin position="1"/>
        <end position="47"/>
    </location>
</feature>
<gene>
    <name type="ordered locus">At1g10780</name>
    <name type="ORF">F20B24.20</name>
    <name type="ORF">T16B5.8</name>
</gene>
<evidence type="ECO:0000255" key="1">
    <source>
        <dbReference type="PROSITE-ProRule" id="PRU00080"/>
    </source>
</evidence>
<evidence type="ECO:0000305" key="2"/>
<name>FB2_ARATH</name>
<organism>
    <name type="scientific">Arabidopsis thaliana</name>
    <name type="common">Mouse-ear cress</name>
    <dbReference type="NCBI Taxonomy" id="3702"/>
    <lineage>
        <taxon>Eukaryota</taxon>
        <taxon>Viridiplantae</taxon>
        <taxon>Streptophyta</taxon>
        <taxon>Embryophyta</taxon>
        <taxon>Tracheophyta</taxon>
        <taxon>Spermatophyta</taxon>
        <taxon>Magnoliopsida</taxon>
        <taxon>eudicotyledons</taxon>
        <taxon>Gunneridae</taxon>
        <taxon>Pentapetalae</taxon>
        <taxon>rosids</taxon>
        <taxon>malvids</taxon>
        <taxon>Brassicales</taxon>
        <taxon>Brassicaceae</taxon>
        <taxon>Camelineae</taxon>
        <taxon>Arabidopsis</taxon>
    </lineage>
</organism>
<protein>
    <recommendedName>
        <fullName>F-box protein At1g10780</fullName>
    </recommendedName>
</protein>
<reference key="1">
    <citation type="journal article" date="2000" name="Nature">
        <title>Sequence and analysis of chromosome 1 of the plant Arabidopsis thaliana.</title>
        <authorList>
            <person name="Theologis A."/>
            <person name="Ecker J.R."/>
            <person name="Palm C.J."/>
            <person name="Federspiel N.A."/>
            <person name="Kaul S."/>
            <person name="White O."/>
            <person name="Alonso J."/>
            <person name="Altafi H."/>
            <person name="Araujo R."/>
            <person name="Bowman C.L."/>
            <person name="Brooks S.Y."/>
            <person name="Buehler E."/>
            <person name="Chan A."/>
            <person name="Chao Q."/>
            <person name="Chen H."/>
            <person name="Cheuk R.F."/>
            <person name="Chin C.W."/>
            <person name="Chung M.K."/>
            <person name="Conn L."/>
            <person name="Conway A.B."/>
            <person name="Conway A.R."/>
            <person name="Creasy T.H."/>
            <person name="Dewar K."/>
            <person name="Dunn P."/>
            <person name="Etgu P."/>
            <person name="Feldblyum T.V."/>
            <person name="Feng J.-D."/>
            <person name="Fong B."/>
            <person name="Fujii C.Y."/>
            <person name="Gill J.E."/>
            <person name="Goldsmith A.D."/>
            <person name="Haas B."/>
            <person name="Hansen N.F."/>
            <person name="Hughes B."/>
            <person name="Huizar L."/>
            <person name="Hunter J.L."/>
            <person name="Jenkins J."/>
            <person name="Johnson-Hopson C."/>
            <person name="Khan S."/>
            <person name="Khaykin E."/>
            <person name="Kim C.J."/>
            <person name="Koo H.L."/>
            <person name="Kremenetskaia I."/>
            <person name="Kurtz D.B."/>
            <person name="Kwan A."/>
            <person name="Lam B."/>
            <person name="Langin-Hooper S."/>
            <person name="Lee A."/>
            <person name="Lee J.M."/>
            <person name="Lenz C.A."/>
            <person name="Li J.H."/>
            <person name="Li Y.-P."/>
            <person name="Lin X."/>
            <person name="Liu S.X."/>
            <person name="Liu Z.A."/>
            <person name="Luros J.S."/>
            <person name="Maiti R."/>
            <person name="Marziali A."/>
            <person name="Militscher J."/>
            <person name="Miranda M."/>
            <person name="Nguyen M."/>
            <person name="Nierman W.C."/>
            <person name="Osborne B.I."/>
            <person name="Pai G."/>
            <person name="Peterson J."/>
            <person name="Pham P.K."/>
            <person name="Rizzo M."/>
            <person name="Rooney T."/>
            <person name="Rowley D."/>
            <person name="Sakano H."/>
            <person name="Salzberg S.L."/>
            <person name="Schwartz J.R."/>
            <person name="Shinn P."/>
            <person name="Southwick A.M."/>
            <person name="Sun H."/>
            <person name="Tallon L.J."/>
            <person name="Tambunga G."/>
            <person name="Toriumi M.J."/>
            <person name="Town C.D."/>
            <person name="Utterback T."/>
            <person name="Van Aken S."/>
            <person name="Vaysberg M."/>
            <person name="Vysotskaia V.S."/>
            <person name="Walker M."/>
            <person name="Wu D."/>
            <person name="Yu G."/>
            <person name="Fraser C.M."/>
            <person name="Venter J.C."/>
            <person name="Davis R.W."/>
        </authorList>
    </citation>
    <scope>NUCLEOTIDE SEQUENCE [LARGE SCALE GENOMIC DNA]</scope>
    <source>
        <strain>cv. Columbia</strain>
    </source>
</reference>
<reference key="2">
    <citation type="journal article" date="2017" name="Plant J.">
        <title>Araport11: a complete reannotation of the Arabidopsis thaliana reference genome.</title>
        <authorList>
            <person name="Cheng C.Y."/>
            <person name="Krishnakumar V."/>
            <person name="Chan A.P."/>
            <person name="Thibaud-Nissen F."/>
            <person name="Schobel S."/>
            <person name="Town C.D."/>
        </authorList>
    </citation>
    <scope>GENOME REANNOTATION</scope>
    <source>
        <strain>cv. Columbia</strain>
    </source>
</reference>
<reference key="3">
    <citation type="submission" date="2004-10" db="EMBL/GenBank/DDBJ databases">
        <title>Arabidopsis ORF clones.</title>
        <authorList>
            <person name="Cheuk R.F."/>
            <person name="Chen H."/>
            <person name="Kim C.J."/>
            <person name="Shinn P."/>
            <person name="Ecker J.R."/>
        </authorList>
    </citation>
    <scope>NUCLEOTIDE SEQUENCE [LARGE SCALE MRNA]</scope>
    <source>
        <strain>cv. Columbia</strain>
    </source>
</reference>
<proteinExistence type="evidence at transcript level"/>
<sequence length="418" mass="47403">MDSLPDAILQYILSYLTSARDVAACNCVSKRWKESTDSVKSVVFHRNSFESIMETDDSDSIVRKMISSSRRLEELVVYSPFTSSGLASWMMHVSSSLRLLELRMDNLASEEVVVEGPLKLDCIGVAKNLEILKLWGVLMMSPPKWDMFPNLRSLEIVGAKMDDSSLSHALRACPNLSNLLLLACEGVKSISIDLPYLEHCKLDFYGQGNTLLVLTSQRLVSLDVQGCSWIRVPETKFLKNLSISSVTGRVYMVDFNNLSSLEALSIRGVQWCWDAICMILQQARDVKHLFMKVEFTGNEALQPFPEIDFVEFFNNHPKLQTFDIHGAMFAALCQKNSLKKLETGFTIPCLEEVVITVRSPLNAEQKMNTLESLVKYARGLKRMVIRILRMKSNHSSADDFCDDICKFRHMNEHLVHIE</sequence>
<keyword id="KW-1185">Reference proteome</keyword>
<dbReference type="EMBL" id="AC007354">
    <property type="protein sequence ID" value="AAD31335.1"/>
    <property type="molecule type" value="Genomic_DNA"/>
</dbReference>
<dbReference type="EMBL" id="AC009398">
    <property type="protein sequence ID" value="AAF17664.1"/>
    <property type="status" value="ALT_SEQ"/>
    <property type="molecule type" value="Genomic_DNA"/>
</dbReference>
<dbReference type="EMBL" id="CP002684">
    <property type="protein sequence ID" value="AEE28645.1"/>
    <property type="molecule type" value="Genomic_DNA"/>
</dbReference>
<dbReference type="EMBL" id="BT015078">
    <property type="protein sequence ID" value="AAT71950.1"/>
    <property type="molecule type" value="mRNA"/>
</dbReference>
<dbReference type="EMBL" id="BT015897">
    <property type="protein sequence ID" value="AAU95433.1"/>
    <property type="molecule type" value="mRNA"/>
</dbReference>
<dbReference type="PIR" id="D86241">
    <property type="entry name" value="D86241"/>
</dbReference>
<dbReference type="RefSeq" id="NP_172548.2">
    <property type="nucleotide sequence ID" value="NM_100954.3"/>
</dbReference>
<dbReference type="BioGRID" id="22861">
    <property type="interactions" value="4"/>
</dbReference>
<dbReference type="FunCoup" id="Q9SAC4">
    <property type="interactions" value="561"/>
</dbReference>
<dbReference type="STRING" id="3702.Q9SAC4"/>
<dbReference type="PaxDb" id="3702-AT1G10780.1"/>
<dbReference type="ProteomicsDB" id="230802"/>
<dbReference type="EnsemblPlants" id="AT1G10780.1">
    <property type="protein sequence ID" value="AT1G10780.1"/>
    <property type="gene ID" value="AT1G10780"/>
</dbReference>
<dbReference type="GeneID" id="837621"/>
<dbReference type="Gramene" id="AT1G10780.1">
    <property type="protein sequence ID" value="AT1G10780.1"/>
    <property type="gene ID" value="AT1G10780"/>
</dbReference>
<dbReference type="KEGG" id="ath:AT1G10780"/>
<dbReference type="Araport" id="AT1G10780"/>
<dbReference type="TAIR" id="AT1G10780"/>
<dbReference type="eggNOG" id="ENOG502QS32">
    <property type="taxonomic scope" value="Eukaryota"/>
</dbReference>
<dbReference type="HOGENOM" id="CLU_053616_0_0_1"/>
<dbReference type="InParanoid" id="Q9SAC4"/>
<dbReference type="OMA" id="RFRYMNR"/>
<dbReference type="PhylomeDB" id="Q9SAC4"/>
<dbReference type="PRO" id="PR:Q9SAC4"/>
<dbReference type="Proteomes" id="UP000006548">
    <property type="component" value="Chromosome 1"/>
</dbReference>
<dbReference type="ExpressionAtlas" id="Q9SAC4">
    <property type="expression patterns" value="baseline and differential"/>
</dbReference>
<dbReference type="GO" id="GO:0009506">
    <property type="term" value="C:plasmodesma"/>
    <property type="evidence" value="ECO:0007005"/>
    <property type="project" value="TAIR"/>
</dbReference>
<dbReference type="Gene3D" id="1.20.1280.50">
    <property type="match status" value="1"/>
</dbReference>
<dbReference type="Gene3D" id="3.80.10.10">
    <property type="entry name" value="Ribonuclease Inhibitor"/>
    <property type="match status" value="1"/>
</dbReference>
<dbReference type="InterPro" id="IPR036047">
    <property type="entry name" value="F-box-like_dom_sf"/>
</dbReference>
<dbReference type="InterPro" id="IPR001810">
    <property type="entry name" value="F-box_dom"/>
</dbReference>
<dbReference type="InterPro" id="IPR050232">
    <property type="entry name" value="FBL13/AtMIF1-like"/>
</dbReference>
<dbReference type="InterPro" id="IPR032675">
    <property type="entry name" value="LRR_dom_sf"/>
</dbReference>
<dbReference type="InterPro" id="IPR055411">
    <property type="entry name" value="LRR_FXL15/At3g58940/PEG3-like"/>
</dbReference>
<dbReference type="PANTHER" id="PTHR31900">
    <property type="entry name" value="F-BOX/RNI SUPERFAMILY PROTEIN-RELATED"/>
    <property type="match status" value="1"/>
</dbReference>
<dbReference type="PANTHER" id="PTHR31900:SF27">
    <property type="entry name" value="FBD DOMAIN-CONTAINING PROTEIN"/>
    <property type="match status" value="1"/>
</dbReference>
<dbReference type="Pfam" id="PF12937">
    <property type="entry name" value="F-box-like"/>
    <property type="match status" value="1"/>
</dbReference>
<dbReference type="Pfam" id="PF24758">
    <property type="entry name" value="LRR_At5g56370"/>
    <property type="match status" value="1"/>
</dbReference>
<dbReference type="SMART" id="SM00256">
    <property type="entry name" value="FBOX"/>
    <property type="match status" value="1"/>
</dbReference>
<dbReference type="SUPFAM" id="SSF81383">
    <property type="entry name" value="F-box domain"/>
    <property type="match status" value="1"/>
</dbReference>
<dbReference type="SUPFAM" id="SSF52047">
    <property type="entry name" value="RNI-like"/>
    <property type="match status" value="1"/>
</dbReference>
<dbReference type="PROSITE" id="PS50181">
    <property type="entry name" value="FBOX"/>
    <property type="match status" value="1"/>
</dbReference>
<accession>Q9SAC4</accession>
<accession>Q9SGX3</accession>
<comment type="sequence caution" evidence="2">
    <conflict type="erroneous gene model prediction">
        <sequence resource="EMBL-CDS" id="AAF17664"/>
    </conflict>
</comment>